<name>NQRF_HAEIG</name>
<sequence>MSDSVILALGIAAFTVIVLVLVAIILFAKSKLVDSGDITIDINDDPEKAITLPAGGKLLGALASKGIFVSSACGGGGSCGQCIVKVKNGGGEILPTELSHINKREAKEGYRLACQVNVKGNMEVELPEEIFGVKKWECTVISNDNKATFIKELKLAIPEGEEVPFRAGGYIQIEAEPHVVNYKDFDIPEEYHEDWDKYDLWRYVSKVDEHIIRAYSMASYPEEKGIIMLNVRIATPPPRQPDAPPGQMSSYIWSLKAGDKVTISGPFGEFFAKETDAEMVFIGGGAGMAPMRSHIFDQLKRLHSKRKMSFWYGARSKREIFYQEDFDQLQAENDNFVWHVALSDALPEDNWTGYTGFIHNVLYENYLKNHEAPEDCEYYMCGPPVMNAAVIKMLKDLGVEDENILLDDFGG</sequence>
<accession>A5UFX3</accession>
<organism>
    <name type="scientific">Haemophilus influenzae (strain PittGG)</name>
    <dbReference type="NCBI Taxonomy" id="374931"/>
    <lineage>
        <taxon>Bacteria</taxon>
        <taxon>Pseudomonadati</taxon>
        <taxon>Pseudomonadota</taxon>
        <taxon>Gammaproteobacteria</taxon>
        <taxon>Pasteurellales</taxon>
        <taxon>Pasteurellaceae</taxon>
        <taxon>Haemophilus</taxon>
    </lineage>
</organism>
<evidence type="ECO:0000255" key="1">
    <source>
        <dbReference type="HAMAP-Rule" id="MF_00430"/>
    </source>
</evidence>
<dbReference type="EC" id="7.2.1.1" evidence="1"/>
<dbReference type="EMBL" id="CP000672">
    <property type="protein sequence ID" value="ABQ99678.1"/>
    <property type="molecule type" value="Genomic_DNA"/>
</dbReference>
<dbReference type="SMR" id="A5UFX3"/>
<dbReference type="KEGG" id="hiq:CGSHiGG_03450"/>
<dbReference type="HOGENOM" id="CLU_003827_7_2_6"/>
<dbReference type="Proteomes" id="UP000001990">
    <property type="component" value="Chromosome"/>
</dbReference>
<dbReference type="GO" id="GO:0005886">
    <property type="term" value="C:plasma membrane"/>
    <property type="evidence" value="ECO:0007669"/>
    <property type="project" value="UniProtKB-SubCell"/>
</dbReference>
<dbReference type="GO" id="GO:0051537">
    <property type="term" value="F:2 iron, 2 sulfur cluster binding"/>
    <property type="evidence" value="ECO:0007669"/>
    <property type="project" value="UniProtKB-KW"/>
</dbReference>
<dbReference type="GO" id="GO:0009055">
    <property type="term" value="F:electron transfer activity"/>
    <property type="evidence" value="ECO:0007669"/>
    <property type="project" value="UniProtKB-UniRule"/>
</dbReference>
<dbReference type="GO" id="GO:0046872">
    <property type="term" value="F:metal ion binding"/>
    <property type="evidence" value="ECO:0007669"/>
    <property type="project" value="UniProtKB-KW"/>
</dbReference>
<dbReference type="GO" id="GO:0016655">
    <property type="term" value="F:oxidoreductase activity, acting on NAD(P)H, quinone or similar compound as acceptor"/>
    <property type="evidence" value="ECO:0007669"/>
    <property type="project" value="InterPro"/>
</dbReference>
<dbReference type="GO" id="GO:0006814">
    <property type="term" value="P:sodium ion transport"/>
    <property type="evidence" value="ECO:0007669"/>
    <property type="project" value="UniProtKB-UniRule"/>
</dbReference>
<dbReference type="CDD" id="cd06188">
    <property type="entry name" value="NADH_quinone_reductase"/>
    <property type="match status" value="1"/>
</dbReference>
<dbReference type="FunFam" id="2.40.30.10:FF:000064">
    <property type="entry name" value="Na(+)-translocating NADH-quinone reductase subunit F"/>
    <property type="match status" value="1"/>
</dbReference>
<dbReference type="FunFam" id="3.40.50.80:FF:000014">
    <property type="entry name" value="Na(+)-translocating NADH-quinone reductase subunit F"/>
    <property type="match status" value="1"/>
</dbReference>
<dbReference type="Gene3D" id="3.10.20.30">
    <property type="match status" value="1"/>
</dbReference>
<dbReference type="Gene3D" id="3.40.50.80">
    <property type="entry name" value="Nucleotide-binding domain of ferredoxin-NADP reductase (FNR) module"/>
    <property type="match status" value="1"/>
</dbReference>
<dbReference type="Gene3D" id="2.40.30.10">
    <property type="entry name" value="Translation factors"/>
    <property type="match status" value="1"/>
</dbReference>
<dbReference type="HAMAP" id="MF_00430">
    <property type="entry name" value="NqrF"/>
    <property type="match status" value="1"/>
</dbReference>
<dbReference type="InterPro" id="IPR036010">
    <property type="entry name" value="2Fe-2S_ferredoxin-like_sf"/>
</dbReference>
<dbReference type="InterPro" id="IPR001041">
    <property type="entry name" value="2Fe-2S_ferredoxin-type"/>
</dbReference>
<dbReference type="InterPro" id="IPR012675">
    <property type="entry name" value="Beta-grasp_dom_sf"/>
</dbReference>
<dbReference type="InterPro" id="IPR008333">
    <property type="entry name" value="Cbr1-like_FAD-bd_dom"/>
</dbReference>
<dbReference type="InterPro" id="IPR017927">
    <property type="entry name" value="FAD-bd_FR_type"/>
</dbReference>
<dbReference type="InterPro" id="IPR001709">
    <property type="entry name" value="Flavoprot_Pyr_Nucl_cyt_Rdtase"/>
</dbReference>
<dbReference type="InterPro" id="IPR039261">
    <property type="entry name" value="FNR_nucleotide-bd"/>
</dbReference>
<dbReference type="InterPro" id="IPR010205">
    <property type="entry name" value="NqrF"/>
</dbReference>
<dbReference type="InterPro" id="IPR001433">
    <property type="entry name" value="OxRdtase_FAD/NAD-bd"/>
</dbReference>
<dbReference type="InterPro" id="IPR017938">
    <property type="entry name" value="Riboflavin_synthase-like_b-brl"/>
</dbReference>
<dbReference type="NCBIfam" id="TIGR01941">
    <property type="entry name" value="nqrF"/>
    <property type="match status" value="1"/>
</dbReference>
<dbReference type="PANTHER" id="PTHR43644">
    <property type="entry name" value="NA(+)-TRANSLOCATING NADH-QUINONE REDUCTASE SUBUNIT"/>
    <property type="match status" value="1"/>
</dbReference>
<dbReference type="PANTHER" id="PTHR43644:SF1">
    <property type="entry name" value="NAD(P)H-FLAVIN REDUCTASE"/>
    <property type="match status" value="1"/>
</dbReference>
<dbReference type="Pfam" id="PF00970">
    <property type="entry name" value="FAD_binding_6"/>
    <property type="match status" value="1"/>
</dbReference>
<dbReference type="Pfam" id="PF00111">
    <property type="entry name" value="Fer2"/>
    <property type="match status" value="1"/>
</dbReference>
<dbReference type="Pfam" id="PF00175">
    <property type="entry name" value="NAD_binding_1"/>
    <property type="match status" value="1"/>
</dbReference>
<dbReference type="PIRSF" id="PIRSF000044">
    <property type="entry name" value="Cis_Diol_DH_RD"/>
    <property type="match status" value="1"/>
</dbReference>
<dbReference type="PRINTS" id="PR00371">
    <property type="entry name" value="FPNCR"/>
</dbReference>
<dbReference type="SUPFAM" id="SSF54292">
    <property type="entry name" value="2Fe-2S ferredoxin-like"/>
    <property type="match status" value="1"/>
</dbReference>
<dbReference type="SUPFAM" id="SSF52343">
    <property type="entry name" value="Ferredoxin reductase-like, C-terminal NADP-linked domain"/>
    <property type="match status" value="1"/>
</dbReference>
<dbReference type="SUPFAM" id="SSF63380">
    <property type="entry name" value="Riboflavin synthase domain-like"/>
    <property type="match status" value="1"/>
</dbReference>
<dbReference type="PROSITE" id="PS51085">
    <property type="entry name" value="2FE2S_FER_2"/>
    <property type="match status" value="1"/>
</dbReference>
<dbReference type="PROSITE" id="PS51384">
    <property type="entry name" value="FAD_FR"/>
    <property type="match status" value="1"/>
</dbReference>
<protein>
    <recommendedName>
        <fullName evidence="1">Na(+)-translocating NADH-quinone reductase subunit F</fullName>
        <shortName evidence="1">Na(+)-NQR subunit F</shortName>
        <shortName evidence="1">Na(+)-translocating NQR subunit F</shortName>
        <ecNumber evidence="1">7.2.1.1</ecNumber>
    </recommendedName>
    <alternativeName>
        <fullName evidence="1">NQR complex subunit F</fullName>
    </alternativeName>
    <alternativeName>
        <fullName evidence="1">NQR-1 subunit F</fullName>
    </alternativeName>
</protein>
<gene>
    <name evidence="1" type="primary">nqrF</name>
    <name type="ordered locus">CGSHiGG_03450</name>
</gene>
<comment type="function">
    <text evidence="1">NQR complex catalyzes the reduction of ubiquinone-1 to ubiquinol by two successive reactions, coupled with the transport of Na(+) ions from the cytoplasm to the periplasm. The first step is catalyzed by NqrF, which accepts electrons from NADH and reduces ubiquinone-1 to ubisemiquinone by a one-electron transfer pathway.</text>
</comment>
<comment type="catalytic activity">
    <reaction evidence="1">
        <text>a ubiquinone + n Na(+)(in) + NADH + H(+) = a ubiquinol + n Na(+)(out) + NAD(+)</text>
        <dbReference type="Rhea" id="RHEA:47748"/>
        <dbReference type="Rhea" id="RHEA-COMP:9565"/>
        <dbReference type="Rhea" id="RHEA-COMP:9566"/>
        <dbReference type="ChEBI" id="CHEBI:15378"/>
        <dbReference type="ChEBI" id="CHEBI:16389"/>
        <dbReference type="ChEBI" id="CHEBI:17976"/>
        <dbReference type="ChEBI" id="CHEBI:29101"/>
        <dbReference type="ChEBI" id="CHEBI:57540"/>
        <dbReference type="ChEBI" id="CHEBI:57945"/>
        <dbReference type="EC" id="7.2.1.1"/>
    </reaction>
</comment>
<comment type="cofactor">
    <cofactor evidence="1">
        <name>[2Fe-2S] cluster</name>
        <dbReference type="ChEBI" id="CHEBI:190135"/>
    </cofactor>
    <text evidence="1">Binds 1 [2Fe-2S] cluster.</text>
</comment>
<comment type="cofactor">
    <cofactor evidence="1">
        <name>FAD</name>
        <dbReference type="ChEBI" id="CHEBI:57692"/>
    </cofactor>
</comment>
<comment type="subunit">
    <text evidence="1">Composed of six subunits; NqrA, NqrB, NqrC, NqrD, NqrE and NqrF.</text>
</comment>
<comment type="subcellular location">
    <subcellularLocation>
        <location evidence="1">Cell inner membrane</location>
        <topology evidence="1">Single-pass membrane protein</topology>
    </subcellularLocation>
</comment>
<comment type="similarity">
    <text evidence="1">Belongs to the NqrF family.</text>
</comment>
<feature type="chain" id="PRO_1000080578" description="Na(+)-translocating NADH-quinone reductase subunit F">
    <location>
        <begin position="1"/>
        <end position="411"/>
    </location>
</feature>
<feature type="transmembrane region" description="Helical" evidence="1">
    <location>
        <begin position="5"/>
        <end position="25"/>
    </location>
</feature>
<feature type="domain" description="2Fe-2S ferredoxin-type" evidence="1">
    <location>
        <begin position="36"/>
        <end position="130"/>
    </location>
</feature>
<feature type="domain" description="FAD-binding FR-type" evidence="1">
    <location>
        <begin position="133"/>
        <end position="273"/>
    </location>
</feature>
<feature type="binding site" evidence="1">
    <location>
        <position position="73"/>
    </location>
    <ligand>
        <name>[2Fe-2S] cluster</name>
        <dbReference type="ChEBI" id="CHEBI:190135"/>
    </ligand>
</feature>
<feature type="binding site" evidence="1">
    <location>
        <position position="79"/>
    </location>
    <ligand>
        <name>[2Fe-2S] cluster</name>
        <dbReference type="ChEBI" id="CHEBI:190135"/>
    </ligand>
</feature>
<feature type="binding site" evidence="1">
    <location>
        <position position="82"/>
    </location>
    <ligand>
        <name>[2Fe-2S] cluster</name>
        <dbReference type="ChEBI" id="CHEBI:190135"/>
    </ligand>
</feature>
<feature type="binding site" evidence="1">
    <location>
        <position position="114"/>
    </location>
    <ligand>
        <name>[2Fe-2S] cluster</name>
        <dbReference type="ChEBI" id="CHEBI:190135"/>
    </ligand>
</feature>
<keyword id="KW-0001">2Fe-2S</keyword>
<keyword id="KW-0997">Cell inner membrane</keyword>
<keyword id="KW-1003">Cell membrane</keyword>
<keyword id="KW-0274">FAD</keyword>
<keyword id="KW-0285">Flavoprotein</keyword>
<keyword id="KW-0406">Ion transport</keyword>
<keyword id="KW-0408">Iron</keyword>
<keyword id="KW-0411">Iron-sulfur</keyword>
<keyword id="KW-0472">Membrane</keyword>
<keyword id="KW-0479">Metal-binding</keyword>
<keyword id="KW-0520">NAD</keyword>
<keyword id="KW-0915">Sodium</keyword>
<keyword id="KW-0739">Sodium transport</keyword>
<keyword id="KW-1278">Translocase</keyword>
<keyword id="KW-0812">Transmembrane</keyword>
<keyword id="KW-1133">Transmembrane helix</keyword>
<keyword id="KW-0813">Transport</keyword>
<keyword id="KW-0830">Ubiquinone</keyword>
<reference key="1">
    <citation type="journal article" date="2007" name="Genome Biol.">
        <title>Characterization and modeling of the Haemophilus influenzae core and supragenomes based on the complete genomic sequences of Rd and 12 clinical nontypeable strains.</title>
        <authorList>
            <person name="Hogg J.S."/>
            <person name="Hu F.Z."/>
            <person name="Janto B."/>
            <person name="Boissy R."/>
            <person name="Hayes J."/>
            <person name="Keefe R."/>
            <person name="Post J.C."/>
            <person name="Ehrlich G.D."/>
        </authorList>
    </citation>
    <scope>NUCLEOTIDE SEQUENCE [LARGE SCALE GENOMIC DNA]</scope>
    <source>
        <strain>PittGG</strain>
    </source>
</reference>
<proteinExistence type="inferred from homology"/>